<evidence type="ECO:0000250" key="1">
    <source>
        <dbReference type="UniProtKB" id="P41855"/>
    </source>
</evidence>
<evidence type="ECO:0000250" key="2">
    <source>
        <dbReference type="UniProtKB" id="P85451"/>
    </source>
</evidence>
<evidence type="ECO:0000255" key="3"/>
<evidence type="ECO:0000269" key="4">
    <source>
    </source>
</evidence>
<evidence type="ECO:0000269" key="5">
    <source>
    </source>
</evidence>
<evidence type="ECO:0000303" key="6">
    <source>
    </source>
</evidence>
<evidence type="ECO:0000303" key="7">
    <source>
    </source>
</evidence>
<evidence type="ECO:0000305" key="8"/>
<proteinExistence type="evidence at protein level"/>
<organism>
    <name type="scientific">Delia radicum</name>
    <name type="common">Cabbage root fly</name>
    <name type="synonym">Anthomyia brassicae</name>
    <dbReference type="NCBI Taxonomy" id="30064"/>
    <lineage>
        <taxon>Eukaryota</taxon>
        <taxon>Metazoa</taxon>
        <taxon>Ecdysozoa</taxon>
        <taxon>Arthropoda</taxon>
        <taxon>Hexapoda</taxon>
        <taxon>Insecta</taxon>
        <taxon>Pterygota</taxon>
        <taxon>Neoptera</taxon>
        <taxon>Endopterygota</taxon>
        <taxon>Diptera</taxon>
        <taxon>Brachycera</taxon>
        <taxon>Muscomorpha</taxon>
        <taxon>Muscoidea</taxon>
        <taxon>Anthomyiidae</taxon>
        <taxon>Anthomyiinae</taxon>
        <taxon>Delia</taxon>
    </lineage>
</organism>
<reference evidence="8" key="1">
    <citation type="journal article" date="2011" name="Peptides">
        <title>Neuropeptides associated with the central nervous system of the cabbage root fly, Delia radicum (L).</title>
        <authorList>
            <person name="Audsley N."/>
            <person name="Matthews H.J."/>
            <person name="Down R.E."/>
            <person name="Weaver R.J."/>
        </authorList>
    </citation>
    <scope>PROTEIN SEQUENCE</scope>
    <scope>TISSUE SPECIFICITY</scope>
    <scope>MASS SPECTROMETRY</scope>
    <scope>AMIDATION AT PHE-8</scope>
    <source>
        <tissue evidence="4">Abdominal ganglion</tissue>
        <tissue evidence="4">Brain</tissue>
        <tissue evidence="4">Corpora allata</tissue>
        <tissue evidence="4">Corpora cardiaca</tissue>
    </source>
</reference>
<reference evidence="8" key="2">
    <citation type="journal article" date="2012" name="PLoS ONE">
        <title>Peptidomics of the agriculturally damaging larval stage of the cabbage root fly Delia radicum (Diptera: Anthomyiidae).</title>
        <authorList>
            <person name="Zoephel J."/>
            <person name="Reiher W."/>
            <person name="Rexer K.-H."/>
            <person name="Kahnt J."/>
            <person name="Wegener C."/>
        </authorList>
    </citation>
    <scope>PROTEIN SEQUENCE</scope>
    <scope>TISSUE SPECIFICITY</scope>
    <scope>DEVELOPMENTAL STAGE</scope>
    <scope>MASS SPECTROMETRY</scope>
    <scope>AMIDATION AT PHE-8</scope>
    <source>
        <tissue evidence="5">CNS</tissue>
    </source>
</reference>
<feature type="peptide" id="PRO_0000419704" description="FMRFamide-like neuropeptide GGNDFMRF-amide" evidence="4 5">
    <location>
        <begin position="1"/>
        <end position="8"/>
    </location>
</feature>
<feature type="modified residue" description="Phenylalanine amide" evidence="4 5">
    <location>
        <position position="8"/>
    </location>
</feature>
<name>FAR4_DELRA</name>
<protein>
    <recommendedName>
        <fullName evidence="6 7">FMRFamide-like neuropeptide GGNDFMRF-amide</fullName>
    </recommendedName>
</protein>
<keyword id="KW-0027">Amidation</keyword>
<keyword id="KW-0903">Direct protein sequencing</keyword>
<keyword id="KW-0527">Neuropeptide</keyword>
<keyword id="KW-0964">Secreted</keyword>
<dbReference type="GO" id="GO:0005576">
    <property type="term" value="C:extracellular region"/>
    <property type="evidence" value="ECO:0007669"/>
    <property type="project" value="UniProtKB-SubCell"/>
</dbReference>
<dbReference type="GO" id="GO:0007218">
    <property type="term" value="P:neuropeptide signaling pathway"/>
    <property type="evidence" value="ECO:0007669"/>
    <property type="project" value="UniProtKB-KW"/>
</dbReference>
<accession>B3EWK0</accession>
<comment type="function">
    <text evidence="1">FMRFamides and FMRFamide-like peptides are neuropeptides.</text>
</comment>
<comment type="subcellular location">
    <subcellularLocation>
        <location evidence="2">Secreted</location>
    </subcellularLocation>
</comment>
<comment type="tissue specificity">
    <text evidence="4 5">In larvae, expressed in the CNS and thoracic perisymapthetic organs (tPSO) but not in the ring gland or abdominal perisymapthetic organs (aPSO) (at protein level). In adults, expressed in brain and thoracic-abdominal ganglion but not in corpora cardiaca and corpora allata (at protein level).</text>
</comment>
<comment type="developmental stage">
    <text evidence="4 5">Detected in larvae and adults.</text>
</comment>
<comment type="mass spectrometry"/>
<comment type="mass spectrometry"/>
<comment type="similarity">
    <text evidence="3">Belongs to the FARP (FMRFamide related peptide) family.</text>
</comment>
<sequence>GGNDFMRF</sequence>